<gene>
    <name evidence="1" type="primary">ndhH</name>
</gene>
<keyword id="KW-0150">Chloroplast</keyword>
<keyword id="KW-0472">Membrane</keyword>
<keyword id="KW-0520">NAD</keyword>
<keyword id="KW-0521">NADP</keyword>
<keyword id="KW-0934">Plastid</keyword>
<keyword id="KW-0618">Plastoquinone</keyword>
<keyword id="KW-0874">Quinone</keyword>
<keyword id="KW-0793">Thylakoid</keyword>
<keyword id="KW-1278">Translocase</keyword>
<keyword id="KW-0813">Transport</keyword>
<evidence type="ECO:0000255" key="1">
    <source>
        <dbReference type="HAMAP-Rule" id="MF_01358"/>
    </source>
</evidence>
<comment type="function">
    <text evidence="1">NDH shuttles electrons from NAD(P)H:plastoquinone, via FMN and iron-sulfur (Fe-S) centers, to quinones in the photosynthetic chain and possibly in a chloroplast respiratory chain. The immediate electron acceptor for the enzyme in this species is believed to be plastoquinone. Couples the redox reaction to proton translocation, and thus conserves the redox energy in a proton gradient.</text>
</comment>
<comment type="catalytic activity">
    <reaction evidence="1">
        <text>a plastoquinone + NADH + (n+1) H(+)(in) = a plastoquinol + NAD(+) + n H(+)(out)</text>
        <dbReference type="Rhea" id="RHEA:42608"/>
        <dbReference type="Rhea" id="RHEA-COMP:9561"/>
        <dbReference type="Rhea" id="RHEA-COMP:9562"/>
        <dbReference type="ChEBI" id="CHEBI:15378"/>
        <dbReference type="ChEBI" id="CHEBI:17757"/>
        <dbReference type="ChEBI" id="CHEBI:57540"/>
        <dbReference type="ChEBI" id="CHEBI:57945"/>
        <dbReference type="ChEBI" id="CHEBI:62192"/>
    </reaction>
</comment>
<comment type="catalytic activity">
    <reaction evidence="1">
        <text>a plastoquinone + NADPH + (n+1) H(+)(in) = a plastoquinol + NADP(+) + n H(+)(out)</text>
        <dbReference type="Rhea" id="RHEA:42612"/>
        <dbReference type="Rhea" id="RHEA-COMP:9561"/>
        <dbReference type="Rhea" id="RHEA-COMP:9562"/>
        <dbReference type="ChEBI" id="CHEBI:15378"/>
        <dbReference type="ChEBI" id="CHEBI:17757"/>
        <dbReference type="ChEBI" id="CHEBI:57783"/>
        <dbReference type="ChEBI" id="CHEBI:58349"/>
        <dbReference type="ChEBI" id="CHEBI:62192"/>
    </reaction>
</comment>
<comment type="subunit">
    <text evidence="1">NDH is composed of at least 16 different subunits, 5 of which are encoded in the nucleus.</text>
</comment>
<comment type="subcellular location">
    <subcellularLocation>
        <location evidence="1">Plastid</location>
        <location evidence="1">Chloroplast thylakoid membrane</location>
        <topology evidence="1">Peripheral membrane protein</topology>
        <orientation evidence="1">Stromal side</orientation>
    </subcellularLocation>
</comment>
<comment type="similarity">
    <text evidence="1">Belongs to the complex I 49 kDa subunit family.</text>
</comment>
<dbReference type="EC" id="7.1.1.-" evidence="1"/>
<dbReference type="EMBL" id="DQ923117">
    <property type="protein sequence ID" value="ABI49921.1"/>
    <property type="molecule type" value="Genomic_DNA"/>
</dbReference>
<dbReference type="RefSeq" id="YP_740707.1">
    <property type="nucleotide sequence ID" value="NC_008336.1"/>
</dbReference>
<dbReference type="SMR" id="Q09FQ4"/>
<dbReference type="GeneID" id="4271655"/>
<dbReference type="GO" id="GO:0009535">
    <property type="term" value="C:chloroplast thylakoid membrane"/>
    <property type="evidence" value="ECO:0007669"/>
    <property type="project" value="UniProtKB-SubCell"/>
</dbReference>
<dbReference type="GO" id="GO:0051287">
    <property type="term" value="F:NAD binding"/>
    <property type="evidence" value="ECO:0007669"/>
    <property type="project" value="InterPro"/>
</dbReference>
<dbReference type="GO" id="GO:0016655">
    <property type="term" value="F:oxidoreductase activity, acting on NAD(P)H, quinone or similar compound as acceptor"/>
    <property type="evidence" value="ECO:0007669"/>
    <property type="project" value="UniProtKB-UniRule"/>
</dbReference>
<dbReference type="GO" id="GO:0048038">
    <property type="term" value="F:quinone binding"/>
    <property type="evidence" value="ECO:0007669"/>
    <property type="project" value="UniProtKB-KW"/>
</dbReference>
<dbReference type="GO" id="GO:0019684">
    <property type="term" value="P:photosynthesis, light reaction"/>
    <property type="evidence" value="ECO:0007669"/>
    <property type="project" value="UniProtKB-UniRule"/>
</dbReference>
<dbReference type="FunFam" id="1.10.645.10:FF:000003">
    <property type="entry name" value="NAD(P)H-quinone oxidoreductase subunit H, chloroplastic"/>
    <property type="match status" value="1"/>
</dbReference>
<dbReference type="Gene3D" id="1.10.645.10">
    <property type="entry name" value="Cytochrome-c3 Hydrogenase, chain B"/>
    <property type="match status" value="1"/>
</dbReference>
<dbReference type="HAMAP" id="MF_01358">
    <property type="entry name" value="NDH1_NuoD"/>
    <property type="match status" value="1"/>
</dbReference>
<dbReference type="InterPro" id="IPR001135">
    <property type="entry name" value="NADH_Q_OxRdtase_suD"/>
</dbReference>
<dbReference type="InterPro" id="IPR014029">
    <property type="entry name" value="NADH_UbQ_OxRdtase_49kDa_CS"/>
</dbReference>
<dbReference type="InterPro" id="IPR022885">
    <property type="entry name" value="NDH1_su_D/H"/>
</dbReference>
<dbReference type="InterPro" id="IPR029014">
    <property type="entry name" value="NiFe-Hase_large"/>
</dbReference>
<dbReference type="NCBIfam" id="NF004739">
    <property type="entry name" value="PRK06075.1"/>
    <property type="match status" value="1"/>
</dbReference>
<dbReference type="NCBIfam" id="NF005649">
    <property type="entry name" value="PRK07415.1"/>
    <property type="match status" value="1"/>
</dbReference>
<dbReference type="PANTHER" id="PTHR11993:SF10">
    <property type="entry name" value="NADH DEHYDROGENASE [UBIQUINONE] IRON-SULFUR PROTEIN 2, MITOCHONDRIAL"/>
    <property type="match status" value="1"/>
</dbReference>
<dbReference type="PANTHER" id="PTHR11993">
    <property type="entry name" value="NADH-UBIQUINONE OXIDOREDUCTASE 49 KDA SUBUNIT"/>
    <property type="match status" value="1"/>
</dbReference>
<dbReference type="Pfam" id="PF00346">
    <property type="entry name" value="Complex1_49kDa"/>
    <property type="match status" value="1"/>
</dbReference>
<dbReference type="SUPFAM" id="SSF56762">
    <property type="entry name" value="HydB/Nqo4-like"/>
    <property type="match status" value="1"/>
</dbReference>
<dbReference type="PROSITE" id="PS00535">
    <property type="entry name" value="COMPLEX1_49K"/>
    <property type="match status" value="1"/>
</dbReference>
<accession>Q09FQ4</accession>
<organism>
    <name type="scientific">Nandina domestica</name>
    <name type="common">Heavenly bamboo</name>
    <dbReference type="NCBI Taxonomy" id="41776"/>
    <lineage>
        <taxon>Eukaryota</taxon>
        <taxon>Viridiplantae</taxon>
        <taxon>Streptophyta</taxon>
        <taxon>Embryophyta</taxon>
        <taxon>Tracheophyta</taxon>
        <taxon>Spermatophyta</taxon>
        <taxon>Magnoliopsida</taxon>
        <taxon>Ranunculales</taxon>
        <taxon>Berberidaceae</taxon>
        <taxon>Nandinoideae</taxon>
        <taxon>Nandineae</taxon>
        <taxon>Nandina</taxon>
    </lineage>
</organism>
<reference key="1">
    <citation type="journal article" date="2006" name="BMC Plant Biol.">
        <title>Rapid and accurate pyrosequencing of angiosperm plastid genomes.</title>
        <authorList>
            <person name="Moore M.J."/>
            <person name="Dhingra A."/>
            <person name="Soltis P.S."/>
            <person name="Shaw R."/>
            <person name="Farmerie W.G."/>
            <person name="Folta K.M."/>
            <person name="Soltis D.E."/>
        </authorList>
    </citation>
    <scope>NUCLEOTIDE SEQUENCE [LARGE SCALE GENOMIC DNA]</scope>
</reference>
<protein>
    <recommendedName>
        <fullName evidence="1">NAD(P)H-quinone oxidoreductase subunit H, chloroplastic</fullName>
        <ecNumber evidence="1">7.1.1.-</ecNumber>
    </recommendedName>
    <alternativeName>
        <fullName>NAD(P)H dehydrogenase subunit H</fullName>
    </alternativeName>
    <alternativeName>
        <fullName evidence="1">NADH-plastoquinone oxidoreductase 49 kDa subunit</fullName>
    </alternativeName>
    <alternativeName>
        <fullName evidence="1">NADH-plastoquinone oxidoreductase subunit H</fullName>
    </alternativeName>
</protein>
<name>NDHH_NANDO</name>
<sequence length="393" mass="45720">MTVPTTRKDLMIVNMGPQHPSMHGVLRLIVTLDGEDVIDCEPILGYLHRGMEKIAENRTIIQYLPYVTRWDYLATMFTEAITVNAPEQLGNIQVPKRASYIRVIMLELSRIASHLLWLGPFMADIGAQTPFFYIFRERELIYDLFEAATGMRMMHNYFRIGGVAADLPHGWIDKCLDFCDYFVTGVTEYQKLITRNPIFLERVEGVGFISGEEAINWGLSGPMLRASGIQWDLRKVDHYECYDEFDWEVQWQKEGDSLARYLVRINEMTESIKIIQQALERIPGGPYENLEVRRFDRTRDSEWNDFDYRFISKKPSPTFELSKQELYVRVEAPKGELGIFLIGDQSVFPWRWKIRPPGFINLQILPQLVKRMKLADIMTILGSIDIIMGEVDR</sequence>
<proteinExistence type="inferred from homology"/>
<feature type="chain" id="PRO_0000358006" description="NAD(P)H-quinone oxidoreductase subunit H, chloroplastic">
    <location>
        <begin position="1"/>
        <end position="393"/>
    </location>
</feature>
<geneLocation type="chloroplast"/>